<sequence length="414" mass="46275">MVLGKVKSLTISFDCLNDSNVPVYSSGDTVSGRVNLEVTGEIRVKSLKIHARGHAKVRWTESRNAGSNTAYTQNYTEEVEYFNHKDILIGHERDDDNSEEGFHTIHSGRHEYAFSFELPQTPLATSFEGRHGSVRYWVKAELHRPWLLPVKLKKEFTVFEHIDINTPSLLSPQAGTKEKTLCCWFCTSGPISLSAKIERKGYTPGESIQIFAEIENCSSRMVVPKAAIYQTQAFYAKGKMKEVKQLVANLRGESLSSGKTETWNGKLLKIPPVSPSILDCSIIRVEYSLMVYVDIPGAMDLLLSLPLVIGTIPLHPFGSRTSSVSSQCSMSMNWLALALPERPEAPPSYAEVVTEEQRRNNLAPVGACDDFERALQGPLFAYIQEFRFLPPPLYSEIDPNPDQSSEDRPSCPSR</sequence>
<dbReference type="EMBL" id="AK122499">
    <property type="protein sequence ID" value="BAC65781.1"/>
    <property type="status" value="ALT_INIT"/>
    <property type="molecule type" value="mRNA"/>
</dbReference>
<dbReference type="EMBL" id="BC031125">
    <property type="protein sequence ID" value="AAH31125.1"/>
    <property type="molecule type" value="mRNA"/>
</dbReference>
<dbReference type="EMBL" id="BC054844">
    <property type="protein sequence ID" value="AAH54844.1"/>
    <property type="molecule type" value="mRNA"/>
</dbReference>
<dbReference type="EMBL" id="BC098474">
    <property type="protein sequence ID" value="AAH98474.1"/>
    <property type="molecule type" value="mRNA"/>
</dbReference>
<dbReference type="CCDS" id="CCDS36736.1"/>
<dbReference type="RefSeq" id="NP_001036056.1">
    <property type="nucleotide sequence ID" value="NM_001042591.2"/>
</dbReference>
<dbReference type="SMR" id="Q7TPQ9"/>
<dbReference type="FunCoup" id="Q7TPQ9">
    <property type="interactions" value="1156"/>
</dbReference>
<dbReference type="STRING" id="10090.ENSMUSP00000096957"/>
<dbReference type="iPTMnet" id="Q7TPQ9"/>
<dbReference type="PhosphoSitePlus" id="Q7TPQ9"/>
<dbReference type="PaxDb" id="10090-ENSMUSP00000096957"/>
<dbReference type="ProteomicsDB" id="283176"/>
<dbReference type="Antibodypedia" id="57571">
    <property type="antibodies" value="138 antibodies from 27 providers"/>
</dbReference>
<dbReference type="DNASU" id="105171"/>
<dbReference type="Ensembl" id="ENSMUST00000099356.10">
    <property type="protein sequence ID" value="ENSMUSP00000096957.3"/>
    <property type="gene ID" value="ENSMUSG00000074794.11"/>
</dbReference>
<dbReference type="GeneID" id="105171"/>
<dbReference type="KEGG" id="mmu:105171"/>
<dbReference type="UCSC" id="uc007rhi.2">
    <property type="organism name" value="mouse"/>
</dbReference>
<dbReference type="AGR" id="MGI:2145242"/>
<dbReference type="CTD" id="57561"/>
<dbReference type="MGI" id="MGI:2145242">
    <property type="gene designation" value="Arrdc3"/>
</dbReference>
<dbReference type="VEuPathDB" id="HostDB:ENSMUSG00000074794"/>
<dbReference type="eggNOG" id="KOG3780">
    <property type="taxonomic scope" value="Eukaryota"/>
</dbReference>
<dbReference type="GeneTree" id="ENSGT00940000155411"/>
<dbReference type="HOGENOM" id="CLU_039221_1_1_1"/>
<dbReference type="InParanoid" id="Q7TPQ9"/>
<dbReference type="OMA" id="IHAGRHE"/>
<dbReference type="OrthoDB" id="2333384at2759"/>
<dbReference type="PhylomeDB" id="Q7TPQ9"/>
<dbReference type="TreeFam" id="TF313650"/>
<dbReference type="BioGRID-ORCS" id="105171">
    <property type="hits" value="6 hits in 78 CRISPR screens"/>
</dbReference>
<dbReference type="ChiTaRS" id="Arrdc3">
    <property type="organism name" value="mouse"/>
</dbReference>
<dbReference type="PRO" id="PR:Q7TPQ9"/>
<dbReference type="Proteomes" id="UP000000589">
    <property type="component" value="Chromosome 13"/>
</dbReference>
<dbReference type="RNAct" id="Q7TPQ9">
    <property type="molecule type" value="protein"/>
</dbReference>
<dbReference type="Bgee" id="ENSMUSG00000074794">
    <property type="expression patterns" value="Expressed in manus and 237 other cell types or tissues"/>
</dbReference>
<dbReference type="ExpressionAtlas" id="Q7TPQ9">
    <property type="expression patterns" value="baseline and differential"/>
</dbReference>
<dbReference type="GO" id="GO:0005769">
    <property type="term" value="C:early endosome"/>
    <property type="evidence" value="ECO:0007669"/>
    <property type="project" value="UniProtKB-SubCell"/>
</dbReference>
<dbReference type="GO" id="GO:0005768">
    <property type="term" value="C:endosome"/>
    <property type="evidence" value="ECO:0000266"/>
    <property type="project" value="MGI"/>
</dbReference>
<dbReference type="GO" id="GO:0005764">
    <property type="term" value="C:lysosome"/>
    <property type="evidence" value="ECO:0007669"/>
    <property type="project" value="UniProtKB-SubCell"/>
</dbReference>
<dbReference type="GO" id="GO:0005886">
    <property type="term" value="C:plasma membrane"/>
    <property type="evidence" value="ECO:0000266"/>
    <property type="project" value="MGI"/>
</dbReference>
<dbReference type="GO" id="GO:0031699">
    <property type="term" value="F:beta-3 adrenergic receptor binding"/>
    <property type="evidence" value="ECO:0000266"/>
    <property type="project" value="MGI"/>
</dbReference>
<dbReference type="GO" id="GO:0060613">
    <property type="term" value="P:fat pad development"/>
    <property type="evidence" value="ECO:0000315"/>
    <property type="project" value="MGI"/>
</dbReference>
<dbReference type="GO" id="GO:0031649">
    <property type="term" value="P:heat generation"/>
    <property type="evidence" value="ECO:0000315"/>
    <property type="project" value="MGI"/>
</dbReference>
<dbReference type="GO" id="GO:0071878">
    <property type="term" value="P:negative regulation of adenylate cyclase-activating adrenergic receptor signaling pathway"/>
    <property type="evidence" value="ECO:0000315"/>
    <property type="project" value="MGI"/>
</dbReference>
<dbReference type="GO" id="GO:0120163">
    <property type="term" value="P:negative regulation of cold-induced thermogenesis"/>
    <property type="evidence" value="ECO:0000315"/>
    <property type="project" value="YuBioLab"/>
</dbReference>
<dbReference type="GO" id="GO:0031651">
    <property type="term" value="P:negative regulation of heat generation"/>
    <property type="evidence" value="ECO:0000315"/>
    <property type="project" value="MGI"/>
</dbReference>
<dbReference type="GO" id="GO:0090327">
    <property type="term" value="P:negative regulation of locomotion involved in locomotory behavior"/>
    <property type="evidence" value="ECO:0000315"/>
    <property type="project" value="MGI"/>
</dbReference>
<dbReference type="GO" id="GO:0035332">
    <property type="term" value="P:positive regulation of hippo signaling"/>
    <property type="evidence" value="ECO:0007669"/>
    <property type="project" value="Ensembl"/>
</dbReference>
<dbReference type="GO" id="GO:0043588">
    <property type="term" value="P:skin development"/>
    <property type="evidence" value="ECO:0000315"/>
    <property type="project" value="MGI"/>
</dbReference>
<dbReference type="GO" id="GO:0001659">
    <property type="term" value="P:temperature homeostasis"/>
    <property type="evidence" value="ECO:0000315"/>
    <property type="project" value="MGI"/>
</dbReference>
<dbReference type="FunFam" id="2.60.40.640:FF:000005">
    <property type="entry name" value="Arrestin domain-containing protein 3"/>
    <property type="match status" value="1"/>
</dbReference>
<dbReference type="FunFam" id="2.60.40.640:FF:000007">
    <property type="entry name" value="Arrestin domain-containing protein 3 mRNA"/>
    <property type="match status" value="1"/>
</dbReference>
<dbReference type="Gene3D" id="2.60.40.640">
    <property type="match status" value="2"/>
</dbReference>
<dbReference type="InterPro" id="IPR014752">
    <property type="entry name" value="Arrestin-like_C"/>
</dbReference>
<dbReference type="InterPro" id="IPR011021">
    <property type="entry name" value="Arrestin-like_N"/>
</dbReference>
<dbReference type="InterPro" id="IPR011022">
    <property type="entry name" value="Arrestin_C-like"/>
</dbReference>
<dbReference type="InterPro" id="IPR050357">
    <property type="entry name" value="Arrestin_domain-protein"/>
</dbReference>
<dbReference type="InterPro" id="IPR014756">
    <property type="entry name" value="Ig_E-set"/>
</dbReference>
<dbReference type="PANTHER" id="PTHR11188">
    <property type="entry name" value="ARRESTIN DOMAIN CONTAINING PROTEIN"/>
    <property type="match status" value="1"/>
</dbReference>
<dbReference type="PANTHER" id="PTHR11188:SF49">
    <property type="entry name" value="ARRESTIN DOMAIN-CONTAINING PROTEIN 3"/>
    <property type="match status" value="1"/>
</dbReference>
<dbReference type="Pfam" id="PF02752">
    <property type="entry name" value="Arrestin_C"/>
    <property type="match status" value="1"/>
</dbReference>
<dbReference type="Pfam" id="PF00339">
    <property type="entry name" value="Arrestin_N"/>
    <property type="match status" value="1"/>
</dbReference>
<dbReference type="SMART" id="SM01017">
    <property type="entry name" value="Arrestin_C"/>
    <property type="match status" value="1"/>
</dbReference>
<dbReference type="SUPFAM" id="SSF81296">
    <property type="entry name" value="E set domains"/>
    <property type="match status" value="2"/>
</dbReference>
<comment type="function">
    <text evidence="1 5">Adapter protein that plays a role in regulating cell-surface expression of adrenergic receptors and probably also other G protein-coupled receptors (PubMed:21982743). Plays a role in NEDD4-mediated ubiquitination and endocytosis af activated ADRB2 and subsequent ADRB2 degradation. May recruit NEDD4 to ADRB2. Alternatively, may function as adapter protein that does not play a major role in recruiting NEDD4 to ADRB2, but rather plays a role in a targeting ADRB2 to endosomes.</text>
</comment>
<comment type="subunit">
    <text evidence="1">Interacts (via PPxY motifs) with NEDD4 (via WW domains). Interacts with ADRB2. Interacts with ADRB3. Interacts with HGS (via PPxY motifs). Does not bind TXN (thioredoxin). Interacts with ITCH.</text>
</comment>
<comment type="subcellular location">
    <subcellularLocation>
        <location evidence="1">Cytoplasm</location>
    </subcellularLocation>
    <subcellularLocation>
        <location evidence="1">Cell membrane</location>
        <topology evidence="1">Peripheral membrane protein</topology>
        <orientation evidence="1">Cytoplasmic side</orientation>
    </subcellularLocation>
    <subcellularLocation>
        <location evidence="1">Lysosome</location>
    </subcellularLocation>
    <subcellularLocation>
        <location evidence="1">Endosome</location>
    </subcellularLocation>
    <subcellularLocation>
        <location evidence="1">Early endosome</location>
    </subcellularLocation>
    <text evidence="1">Associated with plasma membrane, as well as with endosomes and lysosomes during endocytosis.</text>
</comment>
<comment type="tissue specificity">
    <text evidence="3">Detected in visceral fat, subcutaneous fat, brown fat and skeletal muscle, and at lower levels in kidney.</text>
</comment>
<comment type="induction">
    <text evidence="3">Up-regulated by fasting. Transiently up-regulated during the differentiation of pre-adipocytes.</text>
</comment>
<comment type="disruption phenotype">
    <text evidence="3">Mice are born at the expected Mendelian rate, but there is important perinatal lethality and the majority do not survive till weaning. Mutant mice have considerably less body mass and accumulate less body fat than wild-type, in spite of normal food intake. Heterozygous mice display higher oxygen uptake, increased activity levels and higher energy expenditure than wild-type. In addition, they display increased expression of genes required for thermogenesis, increased activation of signaling cascades downstream of beta-adrenergic receptors, more rapid readjustment of body temperature when exposed to cold and increased heat production.</text>
</comment>
<comment type="similarity">
    <text evidence="4">Belongs to the arrestin family.</text>
</comment>
<comment type="sequence caution" evidence="4">
    <conflict type="erroneous initiation">
        <sequence resource="EMBL-CDS" id="BAC65781"/>
    </conflict>
</comment>
<reference key="1">
    <citation type="journal article" date="2003" name="DNA Res.">
        <title>Prediction of the coding sequences of mouse homologues of KIAA gene: II. The complete nucleotide sequences of 400 mouse KIAA-homologous cDNAs identified by screening of terminal sequences of cDNA clones randomly sampled from size-fractionated libraries.</title>
        <authorList>
            <person name="Okazaki N."/>
            <person name="Kikuno R."/>
            <person name="Ohara R."/>
            <person name="Inamoto S."/>
            <person name="Aizawa H."/>
            <person name="Yuasa S."/>
            <person name="Nakajima D."/>
            <person name="Nagase T."/>
            <person name="Ohara O."/>
            <person name="Koga H."/>
        </authorList>
    </citation>
    <scope>NUCLEOTIDE SEQUENCE [LARGE SCALE MRNA]</scope>
    <source>
        <tissue>Brain</tissue>
    </source>
</reference>
<reference key="2">
    <citation type="journal article" date="2004" name="Genome Res.">
        <title>The status, quality, and expansion of the NIH full-length cDNA project: the Mammalian Gene Collection (MGC).</title>
        <authorList>
            <consortium name="The MGC Project Team"/>
        </authorList>
    </citation>
    <scope>NUCLEOTIDE SEQUENCE [LARGE SCALE MRNA]</scope>
    <source>
        <strain>CD-1</strain>
        <strain>FVB/N</strain>
        <tissue>Eye</tissue>
        <tissue>Kidney</tissue>
        <tissue>Neural stem cell</tissue>
    </source>
</reference>
<reference key="3">
    <citation type="journal article" date="2011" name="Cell Metab.">
        <title>The arrestin domain-containing 3 protein regulates body mass and energy expenditure.</title>
        <authorList>
            <person name="Patwari P."/>
            <person name="Emilsson V."/>
            <person name="Schadt E.E."/>
            <person name="Chutkow W.A."/>
            <person name="Lee S."/>
            <person name="Marsili A."/>
            <person name="Zhang Y."/>
            <person name="Dobrin R."/>
            <person name="Cohen D.E."/>
            <person name="Larsen P.R."/>
            <person name="Zavacki A.M."/>
            <person name="Fong L.G."/>
            <person name="Young S.G."/>
            <person name="Lee R.T."/>
        </authorList>
    </citation>
    <scope>FUNCTION</scope>
    <scope>DISRUPTION PHENOTYPE</scope>
    <scope>INDUCTION BY FASTING</scope>
    <scope>TISSUE SPECIFICITY</scope>
</reference>
<accession>Q7TPQ9</accession>
<accession>Q4KMN0</accession>
<accession>Q80TE6</accession>
<accession>Q8K0L7</accession>
<name>ARRD3_MOUSE</name>
<protein>
    <recommendedName>
        <fullName>Arrestin domain-containing protein 3</fullName>
    </recommendedName>
</protein>
<proteinExistence type="evidence at transcript level"/>
<keyword id="KW-1003">Cell membrane</keyword>
<keyword id="KW-0963">Cytoplasm</keyword>
<keyword id="KW-0967">Endosome</keyword>
<keyword id="KW-0458">Lysosome</keyword>
<keyword id="KW-0472">Membrane</keyword>
<keyword id="KW-1185">Reference proteome</keyword>
<keyword id="KW-0677">Repeat</keyword>
<feature type="chain" id="PRO_0000244350" description="Arrestin domain-containing protein 3">
    <location>
        <begin position="1"/>
        <end position="414"/>
    </location>
</feature>
<feature type="region of interest" description="Disordered" evidence="2">
    <location>
        <begin position="393"/>
        <end position="414"/>
    </location>
</feature>
<feature type="short sequence motif" description="PPxY motif 1" evidence="4">
    <location>
        <begin position="346"/>
        <end position="349"/>
    </location>
</feature>
<feature type="short sequence motif" description="PPxY motif 2" evidence="4">
    <location>
        <begin position="391"/>
        <end position="394"/>
    </location>
</feature>
<feature type="compositionally biased region" description="Basic and acidic residues" evidence="2">
    <location>
        <begin position="405"/>
        <end position="414"/>
    </location>
</feature>
<feature type="sequence conflict" description="In Ref. 2; AAH98474." evidence="4" ref="2">
    <original>V</original>
    <variation>A</variation>
    <location>
        <position position="352"/>
    </location>
</feature>
<evidence type="ECO:0000250" key="1">
    <source>
        <dbReference type="UniProtKB" id="Q96B67"/>
    </source>
</evidence>
<evidence type="ECO:0000256" key="2">
    <source>
        <dbReference type="SAM" id="MobiDB-lite"/>
    </source>
</evidence>
<evidence type="ECO:0000269" key="3">
    <source>
    </source>
</evidence>
<evidence type="ECO:0000305" key="4"/>
<evidence type="ECO:0000305" key="5">
    <source>
    </source>
</evidence>
<gene>
    <name type="primary">Arrdc3</name>
    <name type="synonym">Kiaa1376</name>
</gene>
<organism>
    <name type="scientific">Mus musculus</name>
    <name type="common">Mouse</name>
    <dbReference type="NCBI Taxonomy" id="10090"/>
    <lineage>
        <taxon>Eukaryota</taxon>
        <taxon>Metazoa</taxon>
        <taxon>Chordata</taxon>
        <taxon>Craniata</taxon>
        <taxon>Vertebrata</taxon>
        <taxon>Euteleostomi</taxon>
        <taxon>Mammalia</taxon>
        <taxon>Eutheria</taxon>
        <taxon>Euarchontoglires</taxon>
        <taxon>Glires</taxon>
        <taxon>Rodentia</taxon>
        <taxon>Myomorpha</taxon>
        <taxon>Muroidea</taxon>
        <taxon>Muridae</taxon>
        <taxon>Murinae</taxon>
        <taxon>Mus</taxon>
        <taxon>Mus</taxon>
    </lineage>
</organism>